<proteinExistence type="inferred from homology"/>
<sequence>MMVIRPVERSDVSALMQLASKTGGGLTSLPANEATLSARIERAIKTWQGELPKSEQGYVFVLEDSETGTVAGICAIEVAVGLNDPWYNYRVGTLVHASKELNVYNALPTLFLSNDHTGSSELCTLFLDPDWRKEGNGYLLSKSRFMFMAAFRDKFNDKVVAEMRGVIDEHGYSPFWQSLGKRFFSMDFSRADFLCGTGQKAFIAELMPKHPIYTHFLSQEAQDVIGQVHPQTAPARAVLEKEGFRYRNYIDIFDGGPTLECDIDRVRAIRKSRLVEVAEGQPAQGDFPACLVANENYHHFRVVLVRTDPATERLILTAAQLDALKCHAGDRVRLVRLCAEEKTA</sequence>
<organism>
    <name type="scientific">Escherichia coli O157:H7 (strain EC4115 / EHEC)</name>
    <dbReference type="NCBI Taxonomy" id="444450"/>
    <lineage>
        <taxon>Bacteria</taxon>
        <taxon>Pseudomonadati</taxon>
        <taxon>Pseudomonadota</taxon>
        <taxon>Gammaproteobacteria</taxon>
        <taxon>Enterobacterales</taxon>
        <taxon>Enterobacteriaceae</taxon>
        <taxon>Escherichia</taxon>
    </lineage>
</organism>
<dbReference type="EC" id="2.3.1.109" evidence="1"/>
<dbReference type="EMBL" id="CP001164">
    <property type="protein sequence ID" value="ACI37509.1"/>
    <property type="molecule type" value="Genomic_DNA"/>
</dbReference>
<dbReference type="RefSeq" id="WP_000989419.1">
    <property type="nucleotide sequence ID" value="NC_011353.1"/>
</dbReference>
<dbReference type="SMR" id="B5YQ34"/>
<dbReference type="GeneID" id="75171814"/>
<dbReference type="KEGG" id="ecf:ECH74115_2465"/>
<dbReference type="HOGENOM" id="CLU_057655_0_0_6"/>
<dbReference type="UniPathway" id="UPA00185">
    <property type="reaction ID" value="UER00279"/>
</dbReference>
<dbReference type="GO" id="GO:0008791">
    <property type="term" value="F:arginine N-succinyltransferase activity"/>
    <property type="evidence" value="ECO:0007669"/>
    <property type="project" value="UniProtKB-UniRule"/>
</dbReference>
<dbReference type="GO" id="GO:0019544">
    <property type="term" value="P:arginine catabolic process to glutamate"/>
    <property type="evidence" value="ECO:0007669"/>
    <property type="project" value="UniProtKB-UniRule"/>
</dbReference>
<dbReference type="GO" id="GO:0019545">
    <property type="term" value="P:arginine catabolic process to succinate"/>
    <property type="evidence" value="ECO:0007669"/>
    <property type="project" value="UniProtKB-UniRule"/>
</dbReference>
<dbReference type="Gene3D" id="2.40.40.20">
    <property type="match status" value="1"/>
</dbReference>
<dbReference type="Gene3D" id="3.40.630.30">
    <property type="match status" value="1"/>
</dbReference>
<dbReference type="HAMAP" id="MF_01171">
    <property type="entry name" value="AstA"/>
    <property type="match status" value="1"/>
</dbReference>
<dbReference type="InterPro" id="IPR016181">
    <property type="entry name" value="Acyl_CoA_acyltransferase"/>
</dbReference>
<dbReference type="InterPro" id="IPR007041">
    <property type="entry name" value="Arg_succinylTrfase_AstA/AruG"/>
</dbReference>
<dbReference type="InterPro" id="IPR017650">
    <property type="entry name" value="Arginine_N-succinylTrfase"/>
</dbReference>
<dbReference type="NCBIfam" id="TIGR03243">
    <property type="entry name" value="arg_catab_AOST"/>
    <property type="match status" value="1"/>
</dbReference>
<dbReference type="NCBIfam" id="TIGR03244">
    <property type="entry name" value="arg_catab_AstA"/>
    <property type="match status" value="1"/>
</dbReference>
<dbReference type="NCBIfam" id="NF007770">
    <property type="entry name" value="PRK10456.1"/>
    <property type="match status" value="1"/>
</dbReference>
<dbReference type="PANTHER" id="PTHR30420:SF1">
    <property type="entry name" value="ARGININE N-SUCCINYLTRANSFERASE"/>
    <property type="match status" value="1"/>
</dbReference>
<dbReference type="PANTHER" id="PTHR30420">
    <property type="entry name" value="N-SUCCINYLARGININE DIHYDROLASE"/>
    <property type="match status" value="1"/>
</dbReference>
<dbReference type="Pfam" id="PF04958">
    <property type="entry name" value="AstA"/>
    <property type="match status" value="1"/>
</dbReference>
<dbReference type="SUPFAM" id="SSF55729">
    <property type="entry name" value="Acyl-CoA N-acyltransferases (Nat)"/>
    <property type="match status" value="1"/>
</dbReference>
<accession>B5YQ34</accession>
<gene>
    <name evidence="1" type="primary">astA</name>
    <name type="ordered locus">ECH74115_2465</name>
</gene>
<evidence type="ECO:0000255" key="1">
    <source>
        <dbReference type="HAMAP-Rule" id="MF_01171"/>
    </source>
</evidence>
<reference key="1">
    <citation type="journal article" date="2011" name="Proc. Natl. Acad. Sci. U.S.A.">
        <title>Genomic anatomy of Escherichia coli O157:H7 outbreaks.</title>
        <authorList>
            <person name="Eppinger M."/>
            <person name="Mammel M.K."/>
            <person name="Leclerc J.E."/>
            <person name="Ravel J."/>
            <person name="Cebula T.A."/>
        </authorList>
    </citation>
    <scope>NUCLEOTIDE SEQUENCE [LARGE SCALE GENOMIC DNA]</scope>
    <source>
        <strain>EC4115 / EHEC</strain>
    </source>
</reference>
<protein>
    <recommendedName>
        <fullName evidence="1">Arginine N-succinyltransferase</fullName>
        <shortName evidence="1">AST</shortName>
        <ecNumber evidence="1">2.3.1.109</ecNumber>
    </recommendedName>
    <alternativeName>
        <fullName evidence="1">AOST</fullName>
    </alternativeName>
</protein>
<comment type="function">
    <text evidence="1">Catalyzes the transfer of succinyl-CoA to arginine to produce N(2)-succinylarginine.</text>
</comment>
<comment type="catalytic activity">
    <reaction evidence="1">
        <text>succinyl-CoA + L-arginine = N(2)-succinyl-L-arginine + CoA + H(+)</text>
        <dbReference type="Rhea" id="RHEA:15185"/>
        <dbReference type="ChEBI" id="CHEBI:15378"/>
        <dbReference type="ChEBI" id="CHEBI:32682"/>
        <dbReference type="ChEBI" id="CHEBI:57287"/>
        <dbReference type="ChEBI" id="CHEBI:57292"/>
        <dbReference type="ChEBI" id="CHEBI:58241"/>
        <dbReference type="EC" id="2.3.1.109"/>
    </reaction>
</comment>
<comment type="pathway">
    <text evidence="1">Amino-acid degradation; L-arginine degradation via AST pathway; L-glutamate and succinate from L-arginine: step 1/5.</text>
</comment>
<comment type="similarity">
    <text evidence="1">Belongs to the arginine N-succinyltransferase family.</text>
</comment>
<name>ASTA_ECO5E</name>
<feature type="chain" id="PRO_1000137976" description="Arginine N-succinyltransferase">
    <location>
        <begin position="1"/>
        <end position="344"/>
    </location>
</feature>
<feature type="active site" description="Proton donor" evidence="1">
    <location>
        <position position="229"/>
    </location>
</feature>
<feature type="binding site" evidence="1">
    <location>
        <position position="125"/>
    </location>
    <ligand>
        <name>succinyl-CoA</name>
        <dbReference type="ChEBI" id="CHEBI:57292"/>
    </ligand>
</feature>
<keyword id="KW-0012">Acyltransferase</keyword>
<keyword id="KW-0056">Arginine metabolism</keyword>
<keyword id="KW-0808">Transferase</keyword>